<keyword id="KW-0963">Cytoplasm</keyword>
<keyword id="KW-0255">Endonuclease</keyword>
<keyword id="KW-0378">Hydrolase</keyword>
<keyword id="KW-0460">Magnesium</keyword>
<keyword id="KW-0479">Metal-binding</keyword>
<keyword id="KW-0540">Nuclease</keyword>
<keyword id="KW-1185">Reference proteome</keyword>
<dbReference type="EC" id="3.1.26.4" evidence="1"/>
<dbReference type="EMBL" id="CP000727">
    <property type="protein sequence ID" value="ABS37873.1"/>
    <property type="molecule type" value="Genomic_DNA"/>
</dbReference>
<dbReference type="EMBL" id="AM412317">
    <property type="protein sequence ID" value="CAL81955.1"/>
    <property type="molecule type" value="Genomic_DNA"/>
</dbReference>
<dbReference type="RefSeq" id="WP_011948171.1">
    <property type="nucleotide sequence ID" value="NC_009698.1"/>
</dbReference>
<dbReference type="RefSeq" id="YP_001252946.1">
    <property type="nucleotide sequence ID" value="NC_009495.1"/>
</dbReference>
<dbReference type="RefSeq" id="YP_001386334.1">
    <property type="nucleotide sequence ID" value="NC_009698.1"/>
</dbReference>
<dbReference type="SMR" id="A5HYU6"/>
<dbReference type="GeneID" id="5184657"/>
<dbReference type="KEGG" id="cbh:CLC_0439"/>
<dbReference type="KEGG" id="cbo:CBO0402"/>
<dbReference type="PATRIC" id="fig|413999.7.peg.406"/>
<dbReference type="HOGENOM" id="CLU_030894_6_2_9"/>
<dbReference type="PRO" id="PR:A5HYU6"/>
<dbReference type="Proteomes" id="UP000001986">
    <property type="component" value="Chromosome"/>
</dbReference>
<dbReference type="GO" id="GO:0005737">
    <property type="term" value="C:cytoplasm"/>
    <property type="evidence" value="ECO:0007669"/>
    <property type="project" value="UniProtKB-SubCell"/>
</dbReference>
<dbReference type="GO" id="GO:0000287">
    <property type="term" value="F:magnesium ion binding"/>
    <property type="evidence" value="ECO:0007669"/>
    <property type="project" value="UniProtKB-UniRule"/>
</dbReference>
<dbReference type="GO" id="GO:0003676">
    <property type="term" value="F:nucleic acid binding"/>
    <property type="evidence" value="ECO:0007669"/>
    <property type="project" value="InterPro"/>
</dbReference>
<dbReference type="GO" id="GO:0004523">
    <property type="term" value="F:RNA-DNA hybrid ribonuclease activity"/>
    <property type="evidence" value="ECO:0000318"/>
    <property type="project" value="GO_Central"/>
</dbReference>
<dbReference type="GO" id="GO:0043137">
    <property type="term" value="P:DNA replication, removal of RNA primer"/>
    <property type="evidence" value="ECO:0000318"/>
    <property type="project" value="GO_Central"/>
</dbReference>
<dbReference type="CDD" id="cd09278">
    <property type="entry name" value="RNase_HI_prokaryote_like"/>
    <property type="match status" value="1"/>
</dbReference>
<dbReference type="FunFam" id="3.30.420.10:FF:000089">
    <property type="entry name" value="Ribonuclease H"/>
    <property type="match status" value="1"/>
</dbReference>
<dbReference type="Gene3D" id="3.30.420.10">
    <property type="entry name" value="Ribonuclease H-like superfamily/Ribonuclease H"/>
    <property type="match status" value="1"/>
</dbReference>
<dbReference type="HAMAP" id="MF_00042">
    <property type="entry name" value="RNase_H"/>
    <property type="match status" value="1"/>
</dbReference>
<dbReference type="InterPro" id="IPR050092">
    <property type="entry name" value="RNase_H"/>
</dbReference>
<dbReference type="InterPro" id="IPR012337">
    <property type="entry name" value="RNaseH-like_sf"/>
</dbReference>
<dbReference type="InterPro" id="IPR002156">
    <property type="entry name" value="RNaseH_domain"/>
</dbReference>
<dbReference type="InterPro" id="IPR036397">
    <property type="entry name" value="RNaseH_sf"/>
</dbReference>
<dbReference type="InterPro" id="IPR022892">
    <property type="entry name" value="RNaseHI"/>
</dbReference>
<dbReference type="NCBIfam" id="NF001236">
    <property type="entry name" value="PRK00203.1"/>
    <property type="match status" value="1"/>
</dbReference>
<dbReference type="PANTHER" id="PTHR10642">
    <property type="entry name" value="RIBONUCLEASE H1"/>
    <property type="match status" value="1"/>
</dbReference>
<dbReference type="PANTHER" id="PTHR10642:SF26">
    <property type="entry name" value="RIBONUCLEASE H1"/>
    <property type="match status" value="1"/>
</dbReference>
<dbReference type="Pfam" id="PF00075">
    <property type="entry name" value="RNase_H"/>
    <property type="match status" value="1"/>
</dbReference>
<dbReference type="SUPFAM" id="SSF53098">
    <property type="entry name" value="Ribonuclease H-like"/>
    <property type="match status" value="1"/>
</dbReference>
<dbReference type="PROSITE" id="PS50879">
    <property type="entry name" value="RNASE_H_1"/>
    <property type="match status" value="1"/>
</dbReference>
<proteinExistence type="inferred from homology"/>
<organism>
    <name type="scientific">Clostridium botulinum (strain Hall / ATCC 3502 / NCTC 13319 / Type A)</name>
    <dbReference type="NCBI Taxonomy" id="441771"/>
    <lineage>
        <taxon>Bacteria</taxon>
        <taxon>Bacillati</taxon>
        <taxon>Bacillota</taxon>
        <taxon>Clostridia</taxon>
        <taxon>Eubacteriales</taxon>
        <taxon>Clostridiaceae</taxon>
        <taxon>Clostridium</taxon>
    </lineage>
</organism>
<reference key="1">
    <citation type="journal article" date="2007" name="Genome Res.">
        <title>Genome sequence of a proteolytic (Group I) Clostridium botulinum strain Hall A and comparative analysis of the clostridial genomes.</title>
        <authorList>
            <person name="Sebaihia M."/>
            <person name="Peck M.W."/>
            <person name="Minton N.P."/>
            <person name="Thomson N.R."/>
            <person name="Holden M.T.G."/>
            <person name="Mitchell W.J."/>
            <person name="Carter A.T."/>
            <person name="Bentley S.D."/>
            <person name="Mason D.R."/>
            <person name="Crossman L."/>
            <person name="Paul C.J."/>
            <person name="Ivens A."/>
            <person name="Wells-Bennik M.H.J."/>
            <person name="Davis I.J."/>
            <person name="Cerdeno-Tarraga A.M."/>
            <person name="Churcher C."/>
            <person name="Quail M.A."/>
            <person name="Chillingworth T."/>
            <person name="Feltwell T."/>
            <person name="Fraser A."/>
            <person name="Goodhead I."/>
            <person name="Hance Z."/>
            <person name="Jagels K."/>
            <person name="Larke N."/>
            <person name="Maddison M."/>
            <person name="Moule S."/>
            <person name="Mungall K."/>
            <person name="Norbertczak H."/>
            <person name="Rabbinowitsch E."/>
            <person name="Sanders M."/>
            <person name="Simmonds M."/>
            <person name="White B."/>
            <person name="Whithead S."/>
            <person name="Parkhill J."/>
        </authorList>
    </citation>
    <scope>NUCLEOTIDE SEQUENCE [LARGE SCALE GENOMIC DNA]</scope>
    <source>
        <strain>Hall / ATCC 3502 / NCTC 13319 / Type A</strain>
    </source>
</reference>
<reference key="2">
    <citation type="journal article" date="2007" name="PLoS ONE">
        <title>Analysis of the neurotoxin complex genes in Clostridium botulinum A1-A4 and B1 strains: BoNT/A3, /Ba4 and /B1 clusters are located within plasmids.</title>
        <authorList>
            <person name="Smith T.J."/>
            <person name="Hill K.K."/>
            <person name="Foley B.T."/>
            <person name="Detter J.C."/>
            <person name="Munk A.C."/>
            <person name="Bruce D.C."/>
            <person name="Doggett N.A."/>
            <person name="Smith L.A."/>
            <person name="Marks J.D."/>
            <person name="Xie G."/>
            <person name="Brettin T.S."/>
        </authorList>
    </citation>
    <scope>NUCLEOTIDE SEQUENCE [LARGE SCALE GENOMIC DNA]</scope>
    <source>
        <strain>Hall / ATCC 3502 / NCTC 13319 / Type A</strain>
    </source>
</reference>
<protein>
    <recommendedName>
        <fullName evidence="1">Ribonuclease H</fullName>
        <shortName evidence="1">RNase H</shortName>
        <ecNumber evidence="1">3.1.26.4</ecNumber>
    </recommendedName>
</protein>
<comment type="function">
    <text evidence="1">Endonuclease that specifically degrades the RNA of RNA-DNA hybrids.</text>
</comment>
<comment type="catalytic activity">
    <reaction evidence="1">
        <text>Endonucleolytic cleavage to 5'-phosphomonoester.</text>
        <dbReference type="EC" id="3.1.26.4"/>
    </reaction>
</comment>
<comment type="cofactor">
    <cofactor evidence="1">
        <name>Mg(2+)</name>
        <dbReference type="ChEBI" id="CHEBI:18420"/>
    </cofactor>
    <text evidence="1">Binds 1 Mg(2+) ion per subunit. May bind a second metal ion at a regulatory site, or after substrate binding.</text>
</comment>
<comment type="subunit">
    <text evidence="1">Monomer.</text>
</comment>
<comment type="subcellular location">
    <subcellularLocation>
        <location evidence="1">Cytoplasm</location>
    </subcellularLocation>
</comment>
<comment type="similarity">
    <text evidence="1">Belongs to the RNase H family.</text>
</comment>
<accession>A5HYU6</accession>
<accession>A7FZM5</accession>
<feature type="chain" id="PRO_0000332580" description="Ribonuclease H">
    <location>
        <begin position="1"/>
        <end position="149"/>
    </location>
</feature>
<feature type="domain" description="RNase H type-1" evidence="2">
    <location>
        <begin position="1"/>
        <end position="145"/>
    </location>
</feature>
<feature type="binding site" evidence="1">
    <location>
        <position position="9"/>
    </location>
    <ligand>
        <name>Mg(2+)</name>
        <dbReference type="ChEBI" id="CHEBI:18420"/>
        <label>1</label>
    </ligand>
</feature>
<feature type="binding site" evidence="1">
    <location>
        <position position="9"/>
    </location>
    <ligand>
        <name>Mg(2+)</name>
        <dbReference type="ChEBI" id="CHEBI:18420"/>
        <label>2</label>
    </ligand>
</feature>
<feature type="binding site" evidence="1">
    <location>
        <position position="50"/>
    </location>
    <ligand>
        <name>Mg(2+)</name>
        <dbReference type="ChEBI" id="CHEBI:18420"/>
        <label>1</label>
    </ligand>
</feature>
<feature type="binding site" evidence="1">
    <location>
        <position position="72"/>
    </location>
    <ligand>
        <name>Mg(2+)</name>
        <dbReference type="ChEBI" id="CHEBI:18420"/>
        <label>1</label>
    </ligand>
</feature>
<feature type="binding site" evidence="1">
    <location>
        <position position="137"/>
    </location>
    <ligand>
        <name>Mg(2+)</name>
        <dbReference type="ChEBI" id="CHEBI:18420"/>
        <label>2</label>
    </ligand>
</feature>
<sequence>MKKVIIYTDGACRGNGQENTIGAYGIVLMYGEHKKEIKKAFRDTTNNIMELSAVVEALSLLKEPCSIELYSDSAYVINAINQKWLDNWKKNNWKTASKSPVKNKELWEKLDELLKKHSVKFIKVKGHSDNEYNNRCDKLANEAMDEFNV</sequence>
<name>RNH_CLOBH</name>
<evidence type="ECO:0000255" key="1">
    <source>
        <dbReference type="HAMAP-Rule" id="MF_00042"/>
    </source>
</evidence>
<evidence type="ECO:0000255" key="2">
    <source>
        <dbReference type="PROSITE-ProRule" id="PRU00408"/>
    </source>
</evidence>
<gene>
    <name evidence="1" type="primary">rnhA</name>
    <name type="ordered locus">CBO0402</name>
    <name type="ordered locus">CLC_0439</name>
</gene>